<accession>P0CO58</accession>
<accession>Q55LW2</accession>
<accession>Q5K8V7</accession>
<sequence>MVKLPSASRIRSLATVPSTATRAFATVNPTPPAAQPTKSKPRFEKLDDGLTFDDFLSGDVPPENERVVLGNTKQPRLPSFLKHPIPTGASYSGIKKELRGLGLHTVCEEAKCPNIGECWGGGKGNATATIMLMGDQCTRGCRFCSVKTSRAPPPLDVHEPENTAEAISRWGLGYIVLTSVDRDDLVDGGAAHIASTISKIKQKAPNILVEALTPDFATKGVNVIHTVASSGLDVFAHNVETVERCTPFVRDRRAGFSQSLKVLEEAKKGAKAAGREILTKSSIMLGVGEMEEEIHETLRRLRASDVDVVTFGQYMRPTKRHMKVDRYVEPEEFAKWKNVAEGMGFLYVASGPLVRSSYKAGEFFIENVLKKRRAAAAEHAASQLSTQPPEIAAKV</sequence>
<name>LIPA_CRYNJ</name>
<reference key="1">
    <citation type="journal article" date="2005" name="Science">
        <title>The genome of the basidiomycetous yeast and human pathogen Cryptococcus neoformans.</title>
        <authorList>
            <person name="Loftus B.J."/>
            <person name="Fung E."/>
            <person name="Roncaglia P."/>
            <person name="Rowley D."/>
            <person name="Amedeo P."/>
            <person name="Bruno D."/>
            <person name="Vamathevan J."/>
            <person name="Miranda M."/>
            <person name="Anderson I.J."/>
            <person name="Fraser J.A."/>
            <person name="Allen J.E."/>
            <person name="Bosdet I.E."/>
            <person name="Brent M.R."/>
            <person name="Chiu R."/>
            <person name="Doering T.L."/>
            <person name="Donlin M.J."/>
            <person name="D'Souza C.A."/>
            <person name="Fox D.S."/>
            <person name="Grinberg V."/>
            <person name="Fu J."/>
            <person name="Fukushima M."/>
            <person name="Haas B.J."/>
            <person name="Huang J.C."/>
            <person name="Janbon G."/>
            <person name="Jones S.J.M."/>
            <person name="Koo H.L."/>
            <person name="Krzywinski M.I."/>
            <person name="Kwon-Chung K.J."/>
            <person name="Lengeler K.B."/>
            <person name="Maiti R."/>
            <person name="Marra M.A."/>
            <person name="Marra R.E."/>
            <person name="Mathewson C.A."/>
            <person name="Mitchell T.G."/>
            <person name="Pertea M."/>
            <person name="Riggs F.R."/>
            <person name="Salzberg S.L."/>
            <person name="Schein J.E."/>
            <person name="Shvartsbeyn A."/>
            <person name="Shin H."/>
            <person name="Shumway M."/>
            <person name="Specht C.A."/>
            <person name="Suh B.B."/>
            <person name="Tenney A."/>
            <person name="Utterback T.R."/>
            <person name="Wickes B.L."/>
            <person name="Wortman J.R."/>
            <person name="Wye N.H."/>
            <person name="Kronstad J.W."/>
            <person name="Lodge J.K."/>
            <person name="Heitman J."/>
            <person name="Davis R.W."/>
            <person name="Fraser C.M."/>
            <person name="Hyman R.W."/>
        </authorList>
    </citation>
    <scope>NUCLEOTIDE SEQUENCE [LARGE SCALE GENOMIC DNA]</scope>
    <source>
        <strain>JEC21 / ATCC MYA-565</strain>
    </source>
</reference>
<comment type="function">
    <text evidence="1">Catalyzes the radical-mediated insertion of two sulfur atoms into the C-6 and C-8 positions of the octanoyl moiety bound to the lipoyl domains of lipoate-dependent enzymes, thereby converting the octanoylated domains into lipoylated derivatives.</text>
</comment>
<comment type="catalytic activity">
    <reaction evidence="1">
        <text>[[Fe-S] cluster scaffold protein carrying a second [4Fe-4S](2+) cluster] + N(6)-octanoyl-L-lysyl-[protein] + 2 oxidized [2Fe-2S]-[ferredoxin] + 2 S-adenosyl-L-methionine + 4 H(+) = [[Fe-S] cluster scaffold protein] + N(6)-[(R)-dihydrolipoyl]-L-lysyl-[protein] + 4 Fe(3+) + 2 hydrogen sulfide + 2 5'-deoxyadenosine + 2 L-methionine + 2 reduced [2Fe-2S]-[ferredoxin]</text>
        <dbReference type="Rhea" id="RHEA:16585"/>
        <dbReference type="Rhea" id="RHEA-COMP:9928"/>
        <dbReference type="Rhea" id="RHEA-COMP:10000"/>
        <dbReference type="Rhea" id="RHEA-COMP:10001"/>
        <dbReference type="Rhea" id="RHEA-COMP:10475"/>
        <dbReference type="Rhea" id="RHEA-COMP:14568"/>
        <dbReference type="Rhea" id="RHEA-COMP:14569"/>
        <dbReference type="ChEBI" id="CHEBI:15378"/>
        <dbReference type="ChEBI" id="CHEBI:17319"/>
        <dbReference type="ChEBI" id="CHEBI:29034"/>
        <dbReference type="ChEBI" id="CHEBI:29919"/>
        <dbReference type="ChEBI" id="CHEBI:33722"/>
        <dbReference type="ChEBI" id="CHEBI:33737"/>
        <dbReference type="ChEBI" id="CHEBI:33738"/>
        <dbReference type="ChEBI" id="CHEBI:57844"/>
        <dbReference type="ChEBI" id="CHEBI:59789"/>
        <dbReference type="ChEBI" id="CHEBI:78809"/>
        <dbReference type="ChEBI" id="CHEBI:83100"/>
        <dbReference type="EC" id="2.8.1.8"/>
    </reaction>
</comment>
<comment type="cofactor">
    <cofactor evidence="1">
        <name>[4Fe-4S] cluster</name>
        <dbReference type="ChEBI" id="CHEBI:49883"/>
    </cofactor>
    <text evidence="1">Binds 2 [4Fe-4S] clusters per subunit. One cluster is coordinated with 3 cysteines and an exchangeable S-adenosyl-L-methionine.</text>
</comment>
<comment type="pathway">
    <text evidence="1">Protein modification; protein lipoylation via endogenous pathway; protein N(6)-(lipoyl)lysine from octanoyl-[acyl-carrier-protein]: step 2/2.</text>
</comment>
<comment type="subcellular location">
    <subcellularLocation>
        <location evidence="1">Mitochondrion</location>
    </subcellularLocation>
</comment>
<comment type="similarity">
    <text evidence="1">Belongs to the radical SAM superfamily. Lipoyl synthase family.</text>
</comment>
<organism>
    <name type="scientific">Cryptococcus neoformans var. neoformans serotype D (strain JEC21 / ATCC MYA-565)</name>
    <name type="common">Filobasidiella neoformans</name>
    <dbReference type="NCBI Taxonomy" id="214684"/>
    <lineage>
        <taxon>Eukaryota</taxon>
        <taxon>Fungi</taxon>
        <taxon>Dikarya</taxon>
        <taxon>Basidiomycota</taxon>
        <taxon>Agaricomycotina</taxon>
        <taxon>Tremellomycetes</taxon>
        <taxon>Tremellales</taxon>
        <taxon>Cryptococcaceae</taxon>
        <taxon>Cryptococcus</taxon>
        <taxon>Cryptococcus neoformans species complex</taxon>
    </lineage>
</organism>
<keyword id="KW-0004">4Fe-4S</keyword>
<keyword id="KW-0408">Iron</keyword>
<keyword id="KW-0411">Iron-sulfur</keyword>
<keyword id="KW-0479">Metal-binding</keyword>
<keyword id="KW-0496">Mitochondrion</keyword>
<keyword id="KW-1185">Reference proteome</keyword>
<keyword id="KW-0949">S-adenosyl-L-methionine</keyword>
<keyword id="KW-0808">Transferase</keyword>
<keyword id="KW-0809">Transit peptide</keyword>
<dbReference type="EC" id="2.8.1.8" evidence="1"/>
<dbReference type="EMBL" id="AE017352">
    <property type="protein sequence ID" value="AAW46468.1"/>
    <property type="molecule type" value="Genomic_DNA"/>
</dbReference>
<dbReference type="RefSeq" id="XP_567985.1">
    <property type="nucleotide sequence ID" value="XM_567985.2"/>
</dbReference>
<dbReference type="SMR" id="P0CO58"/>
<dbReference type="FunCoup" id="P0CO58">
    <property type="interactions" value="357"/>
</dbReference>
<dbReference type="STRING" id="214684.P0CO58"/>
<dbReference type="PaxDb" id="214684-P0CO58"/>
<dbReference type="EnsemblFungi" id="AAW46468">
    <property type="protein sequence ID" value="AAW46468"/>
    <property type="gene ID" value="CNL04340"/>
</dbReference>
<dbReference type="GeneID" id="3255003"/>
<dbReference type="KEGG" id="cne:CNL04340"/>
<dbReference type="VEuPathDB" id="FungiDB:CNL04340"/>
<dbReference type="eggNOG" id="KOG2672">
    <property type="taxonomic scope" value="Eukaryota"/>
</dbReference>
<dbReference type="HOGENOM" id="CLU_033144_1_0_1"/>
<dbReference type="InParanoid" id="P0CO58"/>
<dbReference type="OMA" id="PYCDIDF"/>
<dbReference type="OrthoDB" id="3231at2759"/>
<dbReference type="UniPathway" id="UPA00538">
    <property type="reaction ID" value="UER00593"/>
</dbReference>
<dbReference type="Proteomes" id="UP000002149">
    <property type="component" value="Chromosome 12"/>
</dbReference>
<dbReference type="GO" id="GO:0005739">
    <property type="term" value="C:mitochondrion"/>
    <property type="evidence" value="ECO:0000318"/>
    <property type="project" value="GO_Central"/>
</dbReference>
<dbReference type="GO" id="GO:0051539">
    <property type="term" value="F:4 iron, 4 sulfur cluster binding"/>
    <property type="evidence" value="ECO:0007669"/>
    <property type="project" value="UniProtKB-UniRule"/>
</dbReference>
<dbReference type="GO" id="GO:0016992">
    <property type="term" value="F:lipoate synthase activity"/>
    <property type="evidence" value="ECO:0000318"/>
    <property type="project" value="GO_Central"/>
</dbReference>
<dbReference type="GO" id="GO:0046872">
    <property type="term" value="F:metal ion binding"/>
    <property type="evidence" value="ECO:0007669"/>
    <property type="project" value="UniProtKB-KW"/>
</dbReference>
<dbReference type="GO" id="GO:0009107">
    <property type="term" value="P:lipoate biosynthetic process"/>
    <property type="evidence" value="ECO:0000318"/>
    <property type="project" value="GO_Central"/>
</dbReference>
<dbReference type="CDD" id="cd01335">
    <property type="entry name" value="Radical_SAM"/>
    <property type="match status" value="1"/>
</dbReference>
<dbReference type="FunFam" id="3.20.20.70:FF:000240">
    <property type="entry name" value="Lipoyl synthase, mitochondrial"/>
    <property type="match status" value="1"/>
</dbReference>
<dbReference type="Gene3D" id="3.20.20.70">
    <property type="entry name" value="Aldolase class I"/>
    <property type="match status" value="1"/>
</dbReference>
<dbReference type="HAMAP" id="MF_00206">
    <property type="entry name" value="Lipoyl_synth"/>
    <property type="match status" value="1"/>
</dbReference>
<dbReference type="InterPro" id="IPR013785">
    <property type="entry name" value="Aldolase_TIM"/>
</dbReference>
<dbReference type="InterPro" id="IPR006638">
    <property type="entry name" value="Elp3/MiaA/NifB-like_rSAM"/>
</dbReference>
<dbReference type="InterPro" id="IPR031691">
    <property type="entry name" value="LIAS_N"/>
</dbReference>
<dbReference type="InterPro" id="IPR003698">
    <property type="entry name" value="Lipoyl_synth"/>
</dbReference>
<dbReference type="InterPro" id="IPR007197">
    <property type="entry name" value="rSAM"/>
</dbReference>
<dbReference type="NCBIfam" id="TIGR00510">
    <property type="entry name" value="lipA"/>
    <property type="match status" value="1"/>
</dbReference>
<dbReference type="NCBIfam" id="NF004019">
    <property type="entry name" value="PRK05481.1"/>
    <property type="match status" value="1"/>
</dbReference>
<dbReference type="NCBIfam" id="NF009544">
    <property type="entry name" value="PRK12928.1"/>
    <property type="match status" value="1"/>
</dbReference>
<dbReference type="PANTHER" id="PTHR10949">
    <property type="entry name" value="LIPOYL SYNTHASE"/>
    <property type="match status" value="1"/>
</dbReference>
<dbReference type="PANTHER" id="PTHR10949:SF0">
    <property type="entry name" value="LIPOYL SYNTHASE, MITOCHONDRIAL"/>
    <property type="match status" value="1"/>
</dbReference>
<dbReference type="Pfam" id="PF16881">
    <property type="entry name" value="LIAS_N"/>
    <property type="match status" value="1"/>
</dbReference>
<dbReference type="Pfam" id="PF04055">
    <property type="entry name" value="Radical_SAM"/>
    <property type="match status" value="1"/>
</dbReference>
<dbReference type="SFLD" id="SFLDF00271">
    <property type="entry name" value="lipoyl_synthase"/>
    <property type="match status" value="1"/>
</dbReference>
<dbReference type="SFLD" id="SFLDG01058">
    <property type="entry name" value="lipoyl_synthase_like"/>
    <property type="match status" value="1"/>
</dbReference>
<dbReference type="SMART" id="SM00729">
    <property type="entry name" value="Elp3"/>
    <property type="match status" value="1"/>
</dbReference>
<dbReference type="SUPFAM" id="SSF102114">
    <property type="entry name" value="Radical SAM enzymes"/>
    <property type="match status" value="1"/>
</dbReference>
<dbReference type="PROSITE" id="PS51918">
    <property type="entry name" value="RADICAL_SAM"/>
    <property type="match status" value="1"/>
</dbReference>
<protein>
    <recommendedName>
        <fullName evidence="1">Lipoyl synthase, mitochondrial</fullName>
        <ecNumber evidence="1">2.8.1.8</ecNumber>
    </recommendedName>
    <alternativeName>
        <fullName evidence="1">Lipoate synthase</fullName>
        <shortName evidence="1">LS</shortName>
        <shortName evidence="1">Lip-syn</shortName>
    </alternativeName>
    <alternativeName>
        <fullName evidence="1">Lipoic acid synthase</fullName>
    </alternativeName>
</protein>
<evidence type="ECO:0000255" key="1">
    <source>
        <dbReference type="HAMAP-Rule" id="MF_03123"/>
    </source>
</evidence>
<evidence type="ECO:0000255" key="2">
    <source>
        <dbReference type="PROSITE-ProRule" id="PRU01266"/>
    </source>
</evidence>
<proteinExistence type="inferred from homology"/>
<gene>
    <name type="ordered locus">CNL04340</name>
</gene>
<feature type="transit peptide" description="Mitochondrion" evidence="1">
    <location>
        <begin position="1"/>
        <end position="24"/>
    </location>
</feature>
<feature type="chain" id="PRO_0000398265" description="Lipoyl synthase, mitochondrial">
    <location>
        <begin position="25"/>
        <end position="395"/>
    </location>
</feature>
<feature type="domain" description="Radical SAM core" evidence="2">
    <location>
        <begin position="122"/>
        <end position="346"/>
    </location>
</feature>
<feature type="binding site" evidence="1">
    <location>
        <position position="107"/>
    </location>
    <ligand>
        <name>[4Fe-4S] cluster</name>
        <dbReference type="ChEBI" id="CHEBI:49883"/>
        <label>1</label>
    </ligand>
</feature>
<feature type="binding site" evidence="1">
    <location>
        <position position="112"/>
    </location>
    <ligand>
        <name>[4Fe-4S] cluster</name>
        <dbReference type="ChEBI" id="CHEBI:49883"/>
        <label>1</label>
    </ligand>
</feature>
<feature type="binding site" evidence="1">
    <location>
        <position position="118"/>
    </location>
    <ligand>
        <name>[4Fe-4S] cluster</name>
        <dbReference type="ChEBI" id="CHEBI:49883"/>
        <label>1</label>
    </ligand>
</feature>
<feature type="binding site" evidence="1">
    <location>
        <position position="137"/>
    </location>
    <ligand>
        <name>[4Fe-4S] cluster</name>
        <dbReference type="ChEBI" id="CHEBI:49883"/>
        <label>2</label>
        <note>4Fe-4S-S-AdoMet</note>
    </ligand>
</feature>
<feature type="binding site" evidence="1">
    <location>
        <position position="141"/>
    </location>
    <ligand>
        <name>[4Fe-4S] cluster</name>
        <dbReference type="ChEBI" id="CHEBI:49883"/>
        <label>2</label>
        <note>4Fe-4S-S-AdoMet</note>
    </ligand>
</feature>
<feature type="binding site" evidence="1">
    <location>
        <position position="144"/>
    </location>
    <ligand>
        <name>[4Fe-4S] cluster</name>
        <dbReference type="ChEBI" id="CHEBI:49883"/>
        <label>2</label>
        <note>4Fe-4S-S-AdoMet</note>
    </ligand>
</feature>
<feature type="binding site" evidence="1">
    <location>
        <position position="357"/>
    </location>
    <ligand>
        <name>[4Fe-4S] cluster</name>
        <dbReference type="ChEBI" id="CHEBI:49883"/>
        <label>1</label>
    </ligand>
</feature>